<name>MOAC_PARL1</name>
<proteinExistence type="inferred from homology"/>
<reference key="1">
    <citation type="journal article" date="2011" name="Stand. Genomic Sci.">
        <title>Complete genome sequence of Parvibaculum lavamentivorans type strain (DS-1(T)).</title>
        <authorList>
            <person name="Schleheck D."/>
            <person name="Weiss M."/>
            <person name="Pitluck S."/>
            <person name="Bruce D."/>
            <person name="Land M.L."/>
            <person name="Han S."/>
            <person name="Saunders E."/>
            <person name="Tapia R."/>
            <person name="Detter C."/>
            <person name="Brettin T."/>
            <person name="Han J."/>
            <person name="Woyke T."/>
            <person name="Goodwin L."/>
            <person name="Pennacchio L."/>
            <person name="Nolan M."/>
            <person name="Cook A.M."/>
            <person name="Kjelleberg S."/>
            <person name="Thomas T."/>
        </authorList>
    </citation>
    <scope>NUCLEOTIDE SEQUENCE [LARGE SCALE GENOMIC DNA]</scope>
    <source>
        <strain>DS-1 / DSM 13023 / NCIMB 13966</strain>
    </source>
</reference>
<evidence type="ECO:0000255" key="1">
    <source>
        <dbReference type="HAMAP-Rule" id="MF_01224"/>
    </source>
</evidence>
<keyword id="KW-0456">Lyase</keyword>
<keyword id="KW-0501">Molybdenum cofactor biosynthesis</keyword>
<keyword id="KW-1185">Reference proteome</keyword>
<protein>
    <recommendedName>
        <fullName evidence="1">Cyclic pyranopterin monophosphate synthase</fullName>
        <ecNumber evidence="1">4.6.1.17</ecNumber>
    </recommendedName>
    <alternativeName>
        <fullName evidence="1">Molybdenum cofactor biosynthesis protein C</fullName>
    </alternativeName>
</protein>
<feature type="chain" id="PRO_1000164897" description="Cyclic pyranopterin monophosphate synthase">
    <location>
        <begin position="1"/>
        <end position="160"/>
    </location>
</feature>
<feature type="active site" evidence="1">
    <location>
        <position position="130"/>
    </location>
</feature>
<feature type="binding site" evidence="1">
    <location>
        <begin position="77"/>
        <end position="79"/>
    </location>
    <ligand>
        <name>substrate</name>
    </ligand>
</feature>
<feature type="binding site" evidence="1">
    <location>
        <begin position="115"/>
        <end position="116"/>
    </location>
    <ligand>
        <name>substrate</name>
    </ligand>
</feature>
<organism>
    <name type="scientific">Parvibaculum lavamentivorans (strain DS-1 / DSM 13023 / NCIMB 13966)</name>
    <dbReference type="NCBI Taxonomy" id="402881"/>
    <lineage>
        <taxon>Bacteria</taxon>
        <taxon>Pseudomonadati</taxon>
        <taxon>Pseudomonadota</taxon>
        <taxon>Alphaproteobacteria</taxon>
        <taxon>Hyphomicrobiales</taxon>
        <taxon>Parvibaculaceae</taxon>
        <taxon>Parvibaculum</taxon>
    </lineage>
</organism>
<gene>
    <name evidence="1" type="primary">moaC</name>
    <name type="ordered locus">Plav_3176</name>
</gene>
<accession>A7HXZ9</accession>
<dbReference type="EC" id="4.6.1.17" evidence="1"/>
<dbReference type="EMBL" id="CP000774">
    <property type="protein sequence ID" value="ABS64782.1"/>
    <property type="molecule type" value="Genomic_DNA"/>
</dbReference>
<dbReference type="RefSeq" id="WP_012112108.1">
    <property type="nucleotide sequence ID" value="NC_009719.1"/>
</dbReference>
<dbReference type="SMR" id="A7HXZ9"/>
<dbReference type="STRING" id="402881.Plav_3176"/>
<dbReference type="KEGG" id="pla:Plav_3176"/>
<dbReference type="eggNOG" id="COG0315">
    <property type="taxonomic scope" value="Bacteria"/>
</dbReference>
<dbReference type="HOGENOM" id="CLU_074693_1_1_5"/>
<dbReference type="OrthoDB" id="9794429at2"/>
<dbReference type="UniPathway" id="UPA00344"/>
<dbReference type="Proteomes" id="UP000006377">
    <property type="component" value="Chromosome"/>
</dbReference>
<dbReference type="GO" id="GO:0061799">
    <property type="term" value="F:cyclic pyranopterin monophosphate synthase activity"/>
    <property type="evidence" value="ECO:0007669"/>
    <property type="project" value="UniProtKB-UniRule"/>
</dbReference>
<dbReference type="GO" id="GO:0006777">
    <property type="term" value="P:Mo-molybdopterin cofactor biosynthetic process"/>
    <property type="evidence" value="ECO:0007669"/>
    <property type="project" value="UniProtKB-UniRule"/>
</dbReference>
<dbReference type="CDD" id="cd01420">
    <property type="entry name" value="MoaC_PE"/>
    <property type="match status" value="1"/>
</dbReference>
<dbReference type="Gene3D" id="3.30.70.640">
    <property type="entry name" value="Molybdopterin cofactor biosynthesis C (MoaC) domain"/>
    <property type="match status" value="1"/>
</dbReference>
<dbReference type="HAMAP" id="MF_01224_B">
    <property type="entry name" value="MoaC_B"/>
    <property type="match status" value="1"/>
</dbReference>
<dbReference type="InterPro" id="IPR023045">
    <property type="entry name" value="MoaC"/>
</dbReference>
<dbReference type="InterPro" id="IPR047594">
    <property type="entry name" value="MoaC_bact/euk"/>
</dbReference>
<dbReference type="InterPro" id="IPR036522">
    <property type="entry name" value="MoaC_sf"/>
</dbReference>
<dbReference type="InterPro" id="IPR050105">
    <property type="entry name" value="MoCo_biosynth_MoaA/MoaC"/>
</dbReference>
<dbReference type="InterPro" id="IPR002820">
    <property type="entry name" value="Mopterin_CF_biosynth-C_dom"/>
</dbReference>
<dbReference type="NCBIfam" id="TIGR00581">
    <property type="entry name" value="moaC"/>
    <property type="match status" value="1"/>
</dbReference>
<dbReference type="NCBIfam" id="NF006870">
    <property type="entry name" value="PRK09364.1"/>
    <property type="match status" value="1"/>
</dbReference>
<dbReference type="PANTHER" id="PTHR22960:SF29">
    <property type="entry name" value="CYCLIC PYRANOPTERIN MONOPHOSPHATE SYNTHASE"/>
    <property type="match status" value="1"/>
</dbReference>
<dbReference type="PANTHER" id="PTHR22960">
    <property type="entry name" value="MOLYBDOPTERIN COFACTOR SYNTHESIS PROTEIN A"/>
    <property type="match status" value="1"/>
</dbReference>
<dbReference type="Pfam" id="PF01967">
    <property type="entry name" value="MoaC"/>
    <property type="match status" value="1"/>
</dbReference>
<dbReference type="SUPFAM" id="SSF55040">
    <property type="entry name" value="Molybdenum cofactor biosynthesis protein C, MoaC"/>
    <property type="match status" value="1"/>
</dbReference>
<comment type="function">
    <text evidence="1">Catalyzes the conversion of (8S)-3',8-cyclo-7,8-dihydroguanosine 5'-triphosphate to cyclic pyranopterin monophosphate (cPMP).</text>
</comment>
<comment type="catalytic activity">
    <reaction evidence="1">
        <text>(8S)-3',8-cyclo-7,8-dihydroguanosine 5'-triphosphate = cyclic pyranopterin phosphate + diphosphate</text>
        <dbReference type="Rhea" id="RHEA:49580"/>
        <dbReference type="ChEBI" id="CHEBI:33019"/>
        <dbReference type="ChEBI" id="CHEBI:59648"/>
        <dbReference type="ChEBI" id="CHEBI:131766"/>
        <dbReference type="EC" id="4.6.1.17"/>
    </reaction>
</comment>
<comment type="pathway">
    <text evidence="1">Cofactor biosynthesis; molybdopterin biosynthesis.</text>
</comment>
<comment type="subunit">
    <text evidence="1">Homohexamer; trimer of dimers.</text>
</comment>
<comment type="similarity">
    <text evidence="1">Belongs to the MoaC family.</text>
</comment>
<sequence length="160" mass="16882">MAAKKLTHLDEKGAARMVDVSSKPVTSRSATAKGRVTMQPATLKLIAEDGLKKGNALEVARLAGIMAAKRTADLIPLCHPLAITKVEVDLKMDKKAGTVEVEATVKVAGQTGVEMEALTAVSVTCLTLYDMAKAVDRGMTIGDIRLTRKTGGKSGDYKAK</sequence>